<gene>
    <name evidence="1" type="primary">cysS</name>
    <name type="ordered locus">EAT1b_1654</name>
</gene>
<name>SYC_EXISA</name>
<accession>C4KZR7</accession>
<comment type="catalytic activity">
    <reaction evidence="1">
        <text>tRNA(Cys) + L-cysteine + ATP = L-cysteinyl-tRNA(Cys) + AMP + diphosphate</text>
        <dbReference type="Rhea" id="RHEA:17773"/>
        <dbReference type="Rhea" id="RHEA-COMP:9661"/>
        <dbReference type="Rhea" id="RHEA-COMP:9679"/>
        <dbReference type="ChEBI" id="CHEBI:30616"/>
        <dbReference type="ChEBI" id="CHEBI:33019"/>
        <dbReference type="ChEBI" id="CHEBI:35235"/>
        <dbReference type="ChEBI" id="CHEBI:78442"/>
        <dbReference type="ChEBI" id="CHEBI:78517"/>
        <dbReference type="ChEBI" id="CHEBI:456215"/>
        <dbReference type="EC" id="6.1.1.16"/>
    </reaction>
</comment>
<comment type="cofactor">
    <cofactor evidence="1">
        <name>Zn(2+)</name>
        <dbReference type="ChEBI" id="CHEBI:29105"/>
    </cofactor>
    <text evidence="1">Binds 1 zinc ion per subunit.</text>
</comment>
<comment type="subunit">
    <text evidence="1">Monomer.</text>
</comment>
<comment type="subcellular location">
    <subcellularLocation>
        <location evidence="1">Cytoplasm</location>
    </subcellularLocation>
</comment>
<comment type="similarity">
    <text evidence="1">Belongs to the class-I aminoacyl-tRNA synthetase family.</text>
</comment>
<dbReference type="EC" id="6.1.1.16" evidence="1"/>
<dbReference type="EMBL" id="CP001615">
    <property type="protein sequence ID" value="ACQ70580.1"/>
    <property type="molecule type" value="Genomic_DNA"/>
</dbReference>
<dbReference type="RefSeq" id="WP_012727698.1">
    <property type="nucleotide sequence ID" value="NC_012673.1"/>
</dbReference>
<dbReference type="SMR" id="C4KZR7"/>
<dbReference type="STRING" id="360911.EAT1b_1654"/>
<dbReference type="KEGG" id="eat:EAT1b_1654"/>
<dbReference type="eggNOG" id="COG0215">
    <property type="taxonomic scope" value="Bacteria"/>
</dbReference>
<dbReference type="HOGENOM" id="CLU_013528_0_1_9"/>
<dbReference type="OrthoDB" id="9815130at2"/>
<dbReference type="Proteomes" id="UP000000716">
    <property type="component" value="Chromosome"/>
</dbReference>
<dbReference type="GO" id="GO:0005829">
    <property type="term" value="C:cytosol"/>
    <property type="evidence" value="ECO:0007669"/>
    <property type="project" value="TreeGrafter"/>
</dbReference>
<dbReference type="GO" id="GO:0005524">
    <property type="term" value="F:ATP binding"/>
    <property type="evidence" value="ECO:0007669"/>
    <property type="project" value="UniProtKB-UniRule"/>
</dbReference>
<dbReference type="GO" id="GO:0004817">
    <property type="term" value="F:cysteine-tRNA ligase activity"/>
    <property type="evidence" value="ECO:0007669"/>
    <property type="project" value="UniProtKB-UniRule"/>
</dbReference>
<dbReference type="GO" id="GO:0008270">
    <property type="term" value="F:zinc ion binding"/>
    <property type="evidence" value="ECO:0007669"/>
    <property type="project" value="UniProtKB-UniRule"/>
</dbReference>
<dbReference type="GO" id="GO:0006423">
    <property type="term" value="P:cysteinyl-tRNA aminoacylation"/>
    <property type="evidence" value="ECO:0007669"/>
    <property type="project" value="UniProtKB-UniRule"/>
</dbReference>
<dbReference type="CDD" id="cd00672">
    <property type="entry name" value="CysRS_core"/>
    <property type="match status" value="1"/>
</dbReference>
<dbReference type="FunFam" id="3.40.50.620:FF:000009">
    <property type="entry name" value="Cysteine--tRNA ligase"/>
    <property type="match status" value="1"/>
</dbReference>
<dbReference type="Gene3D" id="1.20.120.1910">
    <property type="entry name" value="Cysteine-tRNA ligase, C-terminal anti-codon recognition domain"/>
    <property type="match status" value="1"/>
</dbReference>
<dbReference type="Gene3D" id="3.40.50.620">
    <property type="entry name" value="HUPs"/>
    <property type="match status" value="1"/>
</dbReference>
<dbReference type="HAMAP" id="MF_00041">
    <property type="entry name" value="Cys_tRNA_synth"/>
    <property type="match status" value="1"/>
</dbReference>
<dbReference type="InterPro" id="IPR015803">
    <property type="entry name" value="Cys-tRNA-ligase"/>
</dbReference>
<dbReference type="InterPro" id="IPR015273">
    <property type="entry name" value="Cys-tRNA-synt_Ia_DALR"/>
</dbReference>
<dbReference type="InterPro" id="IPR024909">
    <property type="entry name" value="Cys-tRNA/MSH_ligase"/>
</dbReference>
<dbReference type="InterPro" id="IPR014729">
    <property type="entry name" value="Rossmann-like_a/b/a_fold"/>
</dbReference>
<dbReference type="InterPro" id="IPR032678">
    <property type="entry name" value="tRNA-synt_1_cat_dom"/>
</dbReference>
<dbReference type="InterPro" id="IPR009080">
    <property type="entry name" value="tRNAsynth_Ia_anticodon-bd"/>
</dbReference>
<dbReference type="NCBIfam" id="TIGR00435">
    <property type="entry name" value="cysS"/>
    <property type="match status" value="1"/>
</dbReference>
<dbReference type="PANTHER" id="PTHR10890:SF3">
    <property type="entry name" value="CYSTEINE--TRNA LIGASE, CYTOPLASMIC"/>
    <property type="match status" value="1"/>
</dbReference>
<dbReference type="PANTHER" id="PTHR10890">
    <property type="entry name" value="CYSTEINYL-TRNA SYNTHETASE"/>
    <property type="match status" value="1"/>
</dbReference>
<dbReference type="Pfam" id="PF09190">
    <property type="entry name" value="DALR_2"/>
    <property type="match status" value="1"/>
</dbReference>
<dbReference type="Pfam" id="PF01406">
    <property type="entry name" value="tRNA-synt_1e"/>
    <property type="match status" value="1"/>
</dbReference>
<dbReference type="PRINTS" id="PR00983">
    <property type="entry name" value="TRNASYNTHCYS"/>
</dbReference>
<dbReference type="SMART" id="SM00840">
    <property type="entry name" value="DALR_2"/>
    <property type="match status" value="1"/>
</dbReference>
<dbReference type="SUPFAM" id="SSF47323">
    <property type="entry name" value="Anticodon-binding domain of a subclass of class I aminoacyl-tRNA synthetases"/>
    <property type="match status" value="1"/>
</dbReference>
<dbReference type="SUPFAM" id="SSF52374">
    <property type="entry name" value="Nucleotidylyl transferase"/>
    <property type="match status" value="1"/>
</dbReference>
<keyword id="KW-0030">Aminoacyl-tRNA synthetase</keyword>
<keyword id="KW-0067">ATP-binding</keyword>
<keyword id="KW-0963">Cytoplasm</keyword>
<keyword id="KW-0436">Ligase</keyword>
<keyword id="KW-0479">Metal-binding</keyword>
<keyword id="KW-0547">Nucleotide-binding</keyword>
<keyword id="KW-0648">Protein biosynthesis</keyword>
<keyword id="KW-0862">Zinc</keyword>
<reference key="1">
    <citation type="journal article" date="2011" name="J. Bacteriol.">
        <title>Complete genome sequence of the Thermophilic Bacterium Exiguobacterium sp. AT1b.</title>
        <authorList>
            <person name="Vishnivetskaya T.A."/>
            <person name="Lucas S."/>
            <person name="Copeland A."/>
            <person name="Lapidus A."/>
            <person name="Glavina del Rio T."/>
            <person name="Dalin E."/>
            <person name="Tice H."/>
            <person name="Bruce D.C."/>
            <person name="Goodwin L.A."/>
            <person name="Pitluck S."/>
            <person name="Saunders E."/>
            <person name="Brettin T."/>
            <person name="Detter C."/>
            <person name="Han C."/>
            <person name="Larimer F."/>
            <person name="Land M.L."/>
            <person name="Hauser L.J."/>
            <person name="Kyrpides N.C."/>
            <person name="Ovchinnikova G."/>
            <person name="Kathariou S."/>
            <person name="Ramaley R.F."/>
            <person name="Rodrigues D.F."/>
            <person name="Hendrix C."/>
            <person name="Richardson P."/>
            <person name="Tiedje J.M."/>
        </authorList>
    </citation>
    <scope>NUCLEOTIDE SEQUENCE [LARGE SCALE GENOMIC DNA]</scope>
    <source>
        <strain>ATCC BAA-1283 / AT1b</strain>
    </source>
</reference>
<organism>
    <name type="scientific">Exiguobacterium sp. (strain ATCC BAA-1283 / AT1b)</name>
    <dbReference type="NCBI Taxonomy" id="360911"/>
    <lineage>
        <taxon>Bacteria</taxon>
        <taxon>Bacillati</taxon>
        <taxon>Bacillota</taxon>
        <taxon>Bacilli</taxon>
        <taxon>Bacillales</taxon>
        <taxon>Bacillales Family XII. Incertae Sedis</taxon>
        <taxon>Exiguobacterium</taxon>
    </lineage>
</organism>
<evidence type="ECO:0000255" key="1">
    <source>
        <dbReference type="HAMAP-Rule" id="MF_00041"/>
    </source>
</evidence>
<feature type="chain" id="PRO_1000202123" description="Cysteine--tRNA ligase">
    <location>
        <begin position="1"/>
        <end position="465"/>
    </location>
</feature>
<feature type="short sequence motif" description="'HIGH' region">
    <location>
        <begin position="30"/>
        <end position="40"/>
    </location>
</feature>
<feature type="short sequence motif" description="'KMSKS' region">
    <location>
        <begin position="265"/>
        <end position="269"/>
    </location>
</feature>
<feature type="binding site" evidence="1">
    <location>
        <position position="28"/>
    </location>
    <ligand>
        <name>Zn(2+)</name>
        <dbReference type="ChEBI" id="CHEBI:29105"/>
    </ligand>
</feature>
<feature type="binding site" evidence="1">
    <location>
        <position position="208"/>
    </location>
    <ligand>
        <name>Zn(2+)</name>
        <dbReference type="ChEBI" id="CHEBI:29105"/>
    </ligand>
</feature>
<feature type="binding site" evidence="1">
    <location>
        <position position="233"/>
    </location>
    <ligand>
        <name>Zn(2+)</name>
        <dbReference type="ChEBI" id="CHEBI:29105"/>
    </ligand>
</feature>
<feature type="binding site" evidence="1">
    <location>
        <position position="237"/>
    </location>
    <ligand>
        <name>Zn(2+)</name>
        <dbReference type="ChEBI" id="CHEBI:29105"/>
    </ligand>
</feature>
<feature type="binding site" evidence="1">
    <location>
        <position position="268"/>
    </location>
    <ligand>
        <name>ATP</name>
        <dbReference type="ChEBI" id="CHEBI:30616"/>
    </ligand>
</feature>
<proteinExistence type="inferred from homology"/>
<protein>
    <recommendedName>
        <fullName evidence="1">Cysteine--tRNA ligase</fullName>
        <ecNumber evidence="1">6.1.1.16</ecNumber>
    </recommendedName>
    <alternativeName>
        <fullName evidence="1">Cysteinyl-tRNA synthetase</fullName>
        <shortName evidence="1">CysRS</shortName>
    </alternativeName>
</protein>
<sequence>MIQLYNSLTNKKEPFVPIVPGKVSMYVCGPTVYNYIHVGNARPAIAFDTVRRYLTYRGYEVKYVLNFTDVDDKIIRTANELGEDTETLTNRYIEAYLADTGALNVQPADVHPRVTDTMEEIIEFIRQLETEGFAYESEGDVYFRTKKFETYGKLSQQSIEDLRAGSRVDVGEKKEDPLDFVLWKAAKPDEPSWDSPWGKGRPGWHIECSAMAKKHLGTTIDIHAGGHDLKFPHHENEIAQSEACNHAKFANYWLHNGFINIENEKMSKSLGNFLLVHEALKEVDPMVLRFFMLSVHYRHPINYSRELIEQAANGWSRIKEAYQNIEYRLSVTAGLGEASESMERKLESIKASFIESMDDDINTANAVTVLFDLAREANIYAKADHVAKATLEQVLSLFDELTGVLGLTLAEEKELLDAEIDQLIQERNDARAARNFARADEIRDLLKEQNIQLEDTAQGVRWKRL</sequence>